<protein>
    <recommendedName>
        <fullName>Flavodoxin</fullName>
    </recommendedName>
</protein>
<feature type="chain" id="PRO_0000171621" description="Flavodoxin">
    <location>
        <begin position="1"/>
        <end position="148"/>
    </location>
</feature>
<feature type="domain" description="Flavodoxin-like" evidence="1">
    <location>
        <begin position="4"/>
        <end position="145"/>
    </location>
</feature>
<feature type="sequence conflict" description="In Ref. 1; BAA13628." evidence="2" ref="1">
    <original>A</original>
    <variation>P</variation>
    <location>
        <position position="104"/>
    </location>
</feature>
<accession>P71165</accession>
<accession>B8DKD5</accession>
<gene>
    <name type="ordered locus">DvMF_1143</name>
</gene>
<sequence length="148" mass="15630">MANVLIVYGSTTGNTAWVAETVGRDIAEAGHSVEIRDAGQVEAEGLCEGRDLVLFGCSTWGDDEIELQDDFIHLYESLEATGAGKGRAACFGCGDSSYTYFCGAVDAIEERLSGLGADIVADSLKIDGDPRTMRDDVSAWAGRVVTAL</sequence>
<proteinExistence type="evidence at protein level"/>
<name>FLAV_NITV9</name>
<comment type="function">
    <text>Low-potential electron donor to a number of redox enzymes.</text>
</comment>
<comment type="cofactor">
    <cofactor>
        <name>FMN</name>
        <dbReference type="ChEBI" id="CHEBI:58210"/>
    </cofactor>
</comment>
<comment type="similarity">
    <text evidence="2">Belongs to the flavodoxin family.</text>
</comment>
<evidence type="ECO:0000255" key="1">
    <source>
        <dbReference type="PROSITE-ProRule" id="PRU00088"/>
    </source>
</evidence>
<evidence type="ECO:0000305" key="2"/>
<organism>
    <name type="scientific">Nitratidesulfovibrio vulgaris (strain DSM 19637 / Miyazaki F)</name>
    <name type="common">Desulfovibrio vulgaris</name>
    <dbReference type="NCBI Taxonomy" id="883"/>
    <lineage>
        <taxon>Bacteria</taxon>
        <taxon>Pseudomonadati</taxon>
        <taxon>Thermodesulfobacteriota</taxon>
        <taxon>Desulfovibrionia</taxon>
        <taxon>Desulfovibrionales</taxon>
        <taxon>Desulfovibrionaceae</taxon>
        <taxon>Nitratidesulfovibrio</taxon>
    </lineage>
</organism>
<reference key="1">
    <citation type="journal article" date="1998" name="J. Biochem.">
        <title>Cloning and expression of the gene encoding flavodoxin from Desulfovibrio vulgaris (Miyazaki F).</title>
        <authorList>
            <person name="Kitamura M."/>
            <person name="Sagara T."/>
            <person name="Taniguchi M."/>
            <person name="Ashida M."/>
            <person name="Ezoe K."/>
            <person name="Kohno K."/>
            <person name="Kojima S."/>
            <person name="Ozawa K."/>
            <person name="Akutsu H."/>
            <person name="Kumagai I."/>
            <person name="Nakaya T."/>
        </authorList>
    </citation>
    <scope>NUCLEOTIDE SEQUENCE [GENOMIC DNA]</scope>
    <scope>CHARACTERIZATION</scope>
    <source>
        <strain>Isolate F</strain>
    </source>
</reference>
<reference key="2">
    <citation type="submission" date="2008-10" db="EMBL/GenBank/DDBJ databases">
        <title>Complete sequence of Desulfovibrio vulgaris str. 'Miyazaki F'.</title>
        <authorList>
            <person name="Lucas S."/>
            <person name="Copeland A."/>
            <person name="Lapidus A."/>
            <person name="Glavina del Rio T."/>
            <person name="Dalin E."/>
            <person name="Tice H."/>
            <person name="Bruce D."/>
            <person name="Goodwin L."/>
            <person name="Pitluck S."/>
            <person name="Sims D."/>
            <person name="Brettin T."/>
            <person name="Detter J.C."/>
            <person name="Han C."/>
            <person name="Larimer F."/>
            <person name="Land M."/>
            <person name="Hauser L."/>
            <person name="Kyrpides N."/>
            <person name="Mikhailova N."/>
            <person name="Hazen T.C."/>
            <person name="Richardson P."/>
        </authorList>
    </citation>
    <scope>NUCLEOTIDE SEQUENCE [LARGE SCALE GENOMIC DNA]</scope>
    <source>
        <strain>DSM 19637 / Miyazaki F</strain>
    </source>
</reference>
<dbReference type="EMBL" id="D88493">
    <property type="protein sequence ID" value="BAA13628.1"/>
    <property type="molecule type" value="Genomic_DNA"/>
</dbReference>
<dbReference type="EMBL" id="CP001197">
    <property type="protein sequence ID" value="ACL08097.1"/>
    <property type="molecule type" value="Genomic_DNA"/>
</dbReference>
<dbReference type="SMR" id="P71165"/>
<dbReference type="STRING" id="883.DvMF_1143"/>
<dbReference type="KEGG" id="dvm:DvMF_1143"/>
<dbReference type="eggNOG" id="COG0716">
    <property type="taxonomic scope" value="Bacteria"/>
</dbReference>
<dbReference type="HOGENOM" id="CLU_051402_4_2_7"/>
<dbReference type="OrthoDB" id="9790745at2"/>
<dbReference type="GO" id="GO:0009055">
    <property type="term" value="F:electron transfer activity"/>
    <property type="evidence" value="ECO:0007669"/>
    <property type="project" value="InterPro"/>
</dbReference>
<dbReference type="GO" id="GO:0010181">
    <property type="term" value="F:FMN binding"/>
    <property type="evidence" value="ECO:0007669"/>
    <property type="project" value="InterPro"/>
</dbReference>
<dbReference type="Gene3D" id="3.40.50.360">
    <property type="match status" value="1"/>
</dbReference>
<dbReference type="InterPro" id="IPR010087">
    <property type="entry name" value="Flav_short"/>
</dbReference>
<dbReference type="InterPro" id="IPR001094">
    <property type="entry name" value="Flavdoxin-like"/>
</dbReference>
<dbReference type="InterPro" id="IPR050619">
    <property type="entry name" value="Flavodoxin"/>
</dbReference>
<dbReference type="InterPro" id="IPR008254">
    <property type="entry name" value="Flavodoxin/NO_synth"/>
</dbReference>
<dbReference type="InterPro" id="IPR001226">
    <property type="entry name" value="Flavodoxin_CS"/>
</dbReference>
<dbReference type="InterPro" id="IPR029039">
    <property type="entry name" value="Flavoprotein-like_sf"/>
</dbReference>
<dbReference type="NCBIfam" id="TIGR01753">
    <property type="entry name" value="flav_short"/>
    <property type="match status" value="1"/>
</dbReference>
<dbReference type="PANTHER" id="PTHR42809:SF1">
    <property type="entry name" value="FLAVODOXIN 1"/>
    <property type="match status" value="1"/>
</dbReference>
<dbReference type="PANTHER" id="PTHR42809">
    <property type="entry name" value="FLAVODOXIN 2"/>
    <property type="match status" value="1"/>
</dbReference>
<dbReference type="Pfam" id="PF00258">
    <property type="entry name" value="Flavodoxin_1"/>
    <property type="match status" value="1"/>
</dbReference>
<dbReference type="PRINTS" id="PR00369">
    <property type="entry name" value="FLAVODOXIN"/>
</dbReference>
<dbReference type="SUPFAM" id="SSF52218">
    <property type="entry name" value="Flavoproteins"/>
    <property type="match status" value="1"/>
</dbReference>
<dbReference type="PROSITE" id="PS00201">
    <property type="entry name" value="FLAVODOXIN"/>
    <property type="match status" value="1"/>
</dbReference>
<dbReference type="PROSITE" id="PS50902">
    <property type="entry name" value="FLAVODOXIN_LIKE"/>
    <property type="match status" value="1"/>
</dbReference>
<keyword id="KW-0249">Electron transport</keyword>
<keyword id="KW-0285">Flavoprotein</keyword>
<keyword id="KW-0288">FMN</keyword>
<keyword id="KW-0813">Transport</keyword>